<gene>
    <name evidence="1" type="primary">xpt</name>
    <name type="ordered locus">LBA0240</name>
</gene>
<keyword id="KW-0963">Cytoplasm</keyword>
<keyword id="KW-0328">Glycosyltransferase</keyword>
<keyword id="KW-0660">Purine salvage</keyword>
<keyword id="KW-1185">Reference proteome</keyword>
<keyword id="KW-0808">Transferase</keyword>
<accession>Q5FMD9</accession>
<name>XPT_LACAC</name>
<sequence length="192" mass="21265">MKLLEERIKRDGEVLDGNVLKINSFLNHQVDPKLMMEVGKEFKRLFAGEQIDKVLTCEASGIAPGVMTAYQLGVPMVFARKKKPSTLNDAVYWADVFSYTKKVNSKICVEEKFLHEGENILIIDDFVAHGEAVKGMVNIAKQAHCNIVGVGAVVAKTFQGGSDWVKDEGLRFESLASIASFKDGQVHFEGEE</sequence>
<evidence type="ECO:0000255" key="1">
    <source>
        <dbReference type="HAMAP-Rule" id="MF_01184"/>
    </source>
</evidence>
<organism>
    <name type="scientific">Lactobacillus acidophilus (strain ATCC 700396 / NCK56 / N2 / NCFM)</name>
    <dbReference type="NCBI Taxonomy" id="272621"/>
    <lineage>
        <taxon>Bacteria</taxon>
        <taxon>Bacillati</taxon>
        <taxon>Bacillota</taxon>
        <taxon>Bacilli</taxon>
        <taxon>Lactobacillales</taxon>
        <taxon>Lactobacillaceae</taxon>
        <taxon>Lactobacillus</taxon>
    </lineage>
</organism>
<feature type="chain" id="PRO_0000339701" description="Xanthine phosphoribosyltransferase">
    <location>
        <begin position="1"/>
        <end position="192"/>
    </location>
</feature>
<feature type="binding site" evidence="1">
    <location>
        <position position="20"/>
    </location>
    <ligand>
        <name>xanthine</name>
        <dbReference type="ChEBI" id="CHEBI:17712"/>
    </ligand>
</feature>
<feature type="binding site" evidence="1">
    <location>
        <position position="27"/>
    </location>
    <ligand>
        <name>xanthine</name>
        <dbReference type="ChEBI" id="CHEBI:17712"/>
    </ligand>
</feature>
<feature type="binding site" evidence="1">
    <location>
        <begin position="128"/>
        <end position="132"/>
    </location>
    <ligand>
        <name>5-phospho-alpha-D-ribose 1-diphosphate</name>
        <dbReference type="ChEBI" id="CHEBI:58017"/>
    </ligand>
</feature>
<feature type="binding site" evidence="1">
    <location>
        <position position="156"/>
    </location>
    <ligand>
        <name>xanthine</name>
        <dbReference type="ChEBI" id="CHEBI:17712"/>
    </ligand>
</feature>
<proteinExistence type="inferred from homology"/>
<reference key="1">
    <citation type="journal article" date="2005" name="Proc. Natl. Acad. Sci. U.S.A.">
        <title>Complete genome sequence of the probiotic lactic acid bacterium Lactobacillus acidophilus NCFM.</title>
        <authorList>
            <person name="Altermann E."/>
            <person name="Russell W.M."/>
            <person name="Azcarate-Peril M.A."/>
            <person name="Barrangou R."/>
            <person name="Buck B.L."/>
            <person name="McAuliffe O."/>
            <person name="Souther N."/>
            <person name="Dobson A."/>
            <person name="Duong T."/>
            <person name="Callanan M."/>
            <person name="Lick S."/>
            <person name="Hamrick A."/>
            <person name="Cano R."/>
            <person name="Klaenhammer T.R."/>
        </authorList>
    </citation>
    <scope>NUCLEOTIDE SEQUENCE [LARGE SCALE GENOMIC DNA]</scope>
    <source>
        <strain>ATCC 700396 / NCK56 / N2 / NCFM</strain>
    </source>
</reference>
<dbReference type="EC" id="2.4.2.22" evidence="1"/>
<dbReference type="EMBL" id="CP000033">
    <property type="protein sequence ID" value="AAV42135.1"/>
    <property type="molecule type" value="Genomic_DNA"/>
</dbReference>
<dbReference type="RefSeq" id="WP_011254090.1">
    <property type="nucleotide sequence ID" value="NC_006814.3"/>
</dbReference>
<dbReference type="RefSeq" id="YP_193166.1">
    <property type="nucleotide sequence ID" value="NC_006814.3"/>
</dbReference>
<dbReference type="SMR" id="Q5FMD9"/>
<dbReference type="STRING" id="272621.LBA0240"/>
<dbReference type="KEGG" id="lac:LBA0240"/>
<dbReference type="PATRIC" id="fig|272621.13.peg.230"/>
<dbReference type="eggNOG" id="COG0503">
    <property type="taxonomic scope" value="Bacteria"/>
</dbReference>
<dbReference type="HOGENOM" id="CLU_099015_0_0_9"/>
<dbReference type="OrthoDB" id="9790678at2"/>
<dbReference type="BioCyc" id="LACI272621:G1G49-233-MONOMER"/>
<dbReference type="UniPathway" id="UPA00602">
    <property type="reaction ID" value="UER00658"/>
</dbReference>
<dbReference type="Proteomes" id="UP000006381">
    <property type="component" value="Chromosome"/>
</dbReference>
<dbReference type="GO" id="GO:0005737">
    <property type="term" value="C:cytoplasm"/>
    <property type="evidence" value="ECO:0007669"/>
    <property type="project" value="UniProtKB-SubCell"/>
</dbReference>
<dbReference type="GO" id="GO:0000310">
    <property type="term" value="F:xanthine phosphoribosyltransferase activity"/>
    <property type="evidence" value="ECO:0007669"/>
    <property type="project" value="UniProtKB-UniRule"/>
</dbReference>
<dbReference type="GO" id="GO:0006166">
    <property type="term" value="P:purine ribonucleoside salvage"/>
    <property type="evidence" value="ECO:0007669"/>
    <property type="project" value="UniProtKB-KW"/>
</dbReference>
<dbReference type="GO" id="GO:0046110">
    <property type="term" value="P:xanthine metabolic process"/>
    <property type="evidence" value="ECO:0007669"/>
    <property type="project" value="InterPro"/>
</dbReference>
<dbReference type="GO" id="GO:0032265">
    <property type="term" value="P:XMP salvage"/>
    <property type="evidence" value="ECO:0007669"/>
    <property type="project" value="UniProtKB-UniRule"/>
</dbReference>
<dbReference type="CDD" id="cd06223">
    <property type="entry name" value="PRTases_typeI"/>
    <property type="match status" value="1"/>
</dbReference>
<dbReference type="Gene3D" id="3.40.50.2020">
    <property type="match status" value="1"/>
</dbReference>
<dbReference type="HAMAP" id="MF_01184">
    <property type="entry name" value="XPRTase"/>
    <property type="match status" value="1"/>
</dbReference>
<dbReference type="InterPro" id="IPR000836">
    <property type="entry name" value="PRibTrfase_dom"/>
</dbReference>
<dbReference type="InterPro" id="IPR029057">
    <property type="entry name" value="PRTase-like"/>
</dbReference>
<dbReference type="InterPro" id="IPR050118">
    <property type="entry name" value="Pur/Pyrimidine_PRTase"/>
</dbReference>
<dbReference type="InterPro" id="IPR010079">
    <property type="entry name" value="Xanthine_PRibTrfase"/>
</dbReference>
<dbReference type="NCBIfam" id="NF006671">
    <property type="entry name" value="PRK09219.1"/>
    <property type="match status" value="1"/>
</dbReference>
<dbReference type="NCBIfam" id="TIGR01744">
    <property type="entry name" value="XPRTase"/>
    <property type="match status" value="1"/>
</dbReference>
<dbReference type="PANTHER" id="PTHR43864">
    <property type="entry name" value="HYPOXANTHINE/GUANINE PHOSPHORIBOSYLTRANSFERASE"/>
    <property type="match status" value="1"/>
</dbReference>
<dbReference type="PANTHER" id="PTHR43864:SF1">
    <property type="entry name" value="XANTHINE PHOSPHORIBOSYLTRANSFERASE"/>
    <property type="match status" value="1"/>
</dbReference>
<dbReference type="Pfam" id="PF00156">
    <property type="entry name" value="Pribosyltran"/>
    <property type="match status" value="1"/>
</dbReference>
<dbReference type="SUPFAM" id="SSF53271">
    <property type="entry name" value="PRTase-like"/>
    <property type="match status" value="1"/>
</dbReference>
<comment type="function">
    <text evidence="1">Converts the preformed base xanthine, a product of nucleic acid breakdown, to xanthosine 5'-monophosphate (XMP), so it can be reused for RNA or DNA synthesis.</text>
</comment>
<comment type="catalytic activity">
    <reaction evidence="1">
        <text>XMP + diphosphate = xanthine + 5-phospho-alpha-D-ribose 1-diphosphate</text>
        <dbReference type="Rhea" id="RHEA:10800"/>
        <dbReference type="ChEBI" id="CHEBI:17712"/>
        <dbReference type="ChEBI" id="CHEBI:33019"/>
        <dbReference type="ChEBI" id="CHEBI:57464"/>
        <dbReference type="ChEBI" id="CHEBI:58017"/>
        <dbReference type="EC" id="2.4.2.22"/>
    </reaction>
</comment>
<comment type="pathway">
    <text evidence="1">Purine metabolism; XMP biosynthesis via salvage pathway; XMP from xanthine: step 1/1.</text>
</comment>
<comment type="subunit">
    <text evidence="1">Homodimer.</text>
</comment>
<comment type="subcellular location">
    <subcellularLocation>
        <location evidence="1">Cytoplasm</location>
    </subcellularLocation>
</comment>
<comment type="similarity">
    <text evidence="1">Belongs to the purine/pyrimidine phosphoribosyltransferase family. Xpt subfamily.</text>
</comment>
<protein>
    <recommendedName>
        <fullName evidence="1">Xanthine phosphoribosyltransferase</fullName>
        <shortName evidence="1">XPRTase</shortName>
        <ecNumber evidence="1">2.4.2.22</ecNumber>
    </recommendedName>
</protein>